<proteinExistence type="evidence at transcript level"/>
<organismHost>
    <name type="scientific">Enterobacteriaceae</name>
    <dbReference type="NCBI Taxonomy" id="543"/>
</organismHost>
<gene>
    <name type="primary">G</name>
    <name type="ordered locus">Mup31</name>
</gene>
<accession>Q01261</accession>
<protein>
    <recommendedName>
        <fullName>Putative capsid assembly protein G</fullName>
    </recommendedName>
    <alternativeName>
        <fullName>Gene product G</fullName>
        <shortName>gpG</shortName>
    </alternativeName>
</protein>
<sequence length="156" mass="17192">MSLDMNVAVDVRRIQLALDELGTVTRDRAIPRVMAAALLSSTEQAFERQADPDTGKGWEAWSDSWLAWRQDHGFVPGSILTLHGDLARSITTDYGQDYALIGSPKIYAAIHQWGGTPDMAPRPAGVPARPYMGLDKTGEQEIFDAIRKRVSAALRQ</sequence>
<name>GPG_BPMU</name>
<evidence type="ECO:0000269" key="1">
    <source>
    </source>
</evidence>
<evidence type="ECO:0000269" key="2">
    <source>
    </source>
</evidence>
<evidence type="ECO:0000305" key="3"/>
<evidence type="ECO:0000305" key="4">
    <source>
    </source>
</evidence>
<feature type="chain" id="PRO_0000077682" description="Putative capsid assembly protein G">
    <location>
        <begin position="1"/>
        <end position="156"/>
    </location>
</feature>
<keyword id="KW-1035">Host cytoplasm</keyword>
<keyword id="KW-0426">Late protein</keyword>
<keyword id="KW-1185">Reference proteome</keyword>
<keyword id="KW-0118">Viral capsid assembly</keyword>
<keyword id="KW-1188">Viral release from host cell</keyword>
<keyword id="KW-0946">Virion</keyword>
<organism>
    <name type="scientific">Escherichia phage Mu</name>
    <name type="common">Bacteriophage Mu</name>
    <dbReference type="NCBI Taxonomy" id="2681603"/>
    <lineage>
        <taxon>Viruses</taxon>
        <taxon>Duplodnaviria</taxon>
        <taxon>Heunggongvirae</taxon>
        <taxon>Uroviricota</taxon>
        <taxon>Caudoviricetes</taxon>
        <taxon>Muvirus</taxon>
        <taxon>Muvirus mu</taxon>
    </lineage>
</organism>
<reference key="1">
    <citation type="journal article" date="1992" name="DNA Seq.">
        <title>DNA sequence characterization of the G gene region of bacteriophage Mu.</title>
        <authorList>
            <person name="Baxa C.A."/>
            <person name="Chiang L."/>
            <person name="Howe M.M."/>
        </authorList>
    </citation>
    <scope>NUCLEOTIDE SEQUENCE [GENOMIC DNA]</scope>
</reference>
<reference key="2">
    <citation type="journal article" date="2002" name="J. Mol. Biol.">
        <title>Bacteriophage Mu genome sequence: analysis and comparison with Mu-like prophages in Haemophilus, Neisseria and Deinococcus.</title>
        <authorList>
            <person name="Morgan G.J."/>
            <person name="Hatfull G.F."/>
            <person name="Casjens S."/>
            <person name="Hendrix R.W."/>
        </authorList>
    </citation>
    <scope>NUCLEOTIDE SEQUENCE [LARGE SCALE GENOMIC DNA]</scope>
</reference>
<reference key="3">
    <citation type="journal article" date="1993" name="Genetics">
        <title>Mutational analysis of a C-dependent late promoter of bacteriophage Mu.</title>
        <authorList>
            <person name="Chiang L.W."/>
            <person name="Howe M.M."/>
        </authorList>
    </citation>
    <scope>INDUCTION</scope>
</reference>
<reference key="4">
    <citation type="journal article" date="1996" name="Virology">
        <title>Bacteriophage Mu head assembly.</title>
        <authorList>
            <person name="Grimaud R."/>
        </authorList>
    </citation>
    <scope>SUBCELLULAR LOCATION</scope>
</reference>
<comment type="function">
    <text evidence="3">Involved in capsid assembly.</text>
</comment>
<comment type="subcellular location">
    <subcellularLocation>
        <location evidence="2">Virion</location>
    </subcellularLocation>
    <subcellularLocation>
        <location evidence="4">Host cytoplasm</location>
    </subcellularLocation>
    <text evidence="3">Capsid.</text>
</comment>
<comment type="induction">
    <text evidence="1">Expressed in the late phase of the viral replicative cycle. Expression of late genes is activated by the viral late transcription activator C.</text>
</comment>
<comment type="caution">
    <text evidence="3">Translation initiates from a non-canonical start codon (GUG).</text>
</comment>
<comment type="caution">
    <text evidence="3">It is uncertain whether Met-1 or Met-5 is the initiator.</text>
</comment>
<dbReference type="EMBL" id="M74911">
    <property type="protein sequence ID" value="AAA68901.1"/>
    <property type="molecule type" value="Genomic_DNA"/>
</dbReference>
<dbReference type="EMBL" id="AF083977">
    <property type="protein sequence ID" value="AAF01109.1"/>
    <property type="molecule type" value="Genomic_DNA"/>
</dbReference>
<dbReference type="PIR" id="C56613">
    <property type="entry name" value="C56613"/>
</dbReference>
<dbReference type="RefSeq" id="NP_050635.1">
    <property type="nucleotide sequence ID" value="NC_000929.1"/>
</dbReference>
<dbReference type="GeneID" id="2636282"/>
<dbReference type="KEGG" id="vg:2636282"/>
<dbReference type="Proteomes" id="UP000002611">
    <property type="component" value="Genome"/>
</dbReference>
<dbReference type="GO" id="GO:0030430">
    <property type="term" value="C:host cell cytoplasm"/>
    <property type="evidence" value="ECO:0007669"/>
    <property type="project" value="UniProtKB-SubCell"/>
</dbReference>
<dbReference type="GO" id="GO:0044423">
    <property type="term" value="C:virion component"/>
    <property type="evidence" value="ECO:0007669"/>
    <property type="project" value="UniProtKB-KW"/>
</dbReference>
<dbReference type="InterPro" id="IPR006522">
    <property type="entry name" value="Phage_virion_morphogenesis"/>
</dbReference>
<dbReference type="NCBIfam" id="TIGR01635">
    <property type="entry name" value="tail_comp_S"/>
    <property type="match status" value="1"/>
</dbReference>
<dbReference type="Pfam" id="PF05069">
    <property type="entry name" value="Phage_tail_S"/>
    <property type="match status" value="1"/>
</dbReference>